<protein>
    <recommendedName>
        <fullName evidence="1">Small ribosomal subunit protein uS4</fullName>
    </recommendedName>
    <alternativeName>
        <fullName evidence="2">30S ribosomal protein S4</fullName>
    </alternativeName>
</protein>
<reference key="1">
    <citation type="journal article" date="2006" name="J. Bacteriol.">
        <title>Comparative genomic evidence for a close relationship between the dimorphic prosthecate bacteria Hyphomonas neptunium and Caulobacter crescentus.</title>
        <authorList>
            <person name="Badger J.H."/>
            <person name="Hoover T.R."/>
            <person name="Brun Y.V."/>
            <person name="Weiner R.M."/>
            <person name="Laub M.T."/>
            <person name="Alexandre G."/>
            <person name="Mrazek J."/>
            <person name="Ren Q."/>
            <person name="Paulsen I.T."/>
            <person name="Nelson K.E."/>
            <person name="Khouri H.M."/>
            <person name="Radune D."/>
            <person name="Sosa J."/>
            <person name="Dodson R.J."/>
            <person name="Sullivan S.A."/>
            <person name="Rosovitz M.J."/>
            <person name="Madupu R."/>
            <person name="Brinkac L.M."/>
            <person name="Durkin A.S."/>
            <person name="Daugherty S.C."/>
            <person name="Kothari S.P."/>
            <person name="Giglio M.G."/>
            <person name="Zhou L."/>
            <person name="Haft D.H."/>
            <person name="Selengut J.D."/>
            <person name="Davidsen T.M."/>
            <person name="Yang Q."/>
            <person name="Zafar N."/>
            <person name="Ward N.L."/>
        </authorList>
    </citation>
    <scope>NUCLEOTIDE SEQUENCE [LARGE SCALE GENOMIC DNA]</scope>
    <source>
        <strain>ATCC 15444</strain>
    </source>
</reference>
<comment type="function">
    <text evidence="1">One of the primary rRNA binding proteins, it binds directly to 16S rRNA where it nucleates assembly of the body of the 30S subunit.</text>
</comment>
<comment type="function">
    <text evidence="1">With S5 and S12 plays an important role in translational accuracy.</text>
</comment>
<comment type="subunit">
    <text evidence="1">Part of the 30S ribosomal subunit. Contacts protein S5. The interaction surface between S4 and S5 is involved in control of translational fidelity.</text>
</comment>
<comment type="similarity">
    <text evidence="1">Belongs to the universal ribosomal protein uS4 family.</text>
</comment>
<name>RS4_HYPNA</name>
<feature type="chain" id="PRO_0000293293" description="Small ribosomal subunit protein uS4">
    <location>
        <begin position="1"/>
        <end position="205"/>
    </location>
</feature>
<feature type="domain" description="S4 RNA-binding" evidence="1">
    <location>
        <begin position="94"/>
        <end position="157"/>
    </location>
</feature>
<evidence type="ECO:0000255" key="1">
    <source>
        <dbReference type="HAMAP-Rule" id="MF_01306"/>
    </source>
</evidence>
<evidence type="ECO:0000305" key="2"/>
<keyword id="KW-1185">Reference proteome</keyword>
<keyword id="KW-0687">Ribonucleoprotein</keyword>
<keyword id="KW-0689">Ribosomal protein</keyword>
<keyword id="KW-0694">RNA-binding</keyword>
<keyword id="KW-0699">rRNA-binding</keyword>
<gene>
    <name evidence="1" type="primary">rpsD</name>
    <name type="ordered locus">HNE_1956</name>
</gene>
<accession>Q0C0T6</accession>
<organism>
    <name type="scientific">Hyphomonas neptunium (strain ATCC 15444)</name>
    <dbReference type="NCBI Taxonomy" id="228405"/>
    <lineage>
        <taxon>Bacteria</taxon>
        <taxon>Pseudomonadati</taxon>
        <taxon>Pseudomonadota</taxon>
        <taxon>Alphaproteobacteria</taxon>
        <taxon>Hyphomonadales</taxon>
        <taxon>Hyphomonadaceae</taxon>
        <taxon>Hyphomonas</taxon>
    </lineage>
</organism>
<proteinExistence type="inferred from homology"/>
<sequence>MSRRHSAKYKIDRRVGENIWGRAKSPFNKRNYKPGQHGQNRRNKVSDFGMQLMAKQKLKAYYGDITEKQFAKTYVEAARMKGNSAENLIGLLESRLDAVVYRAKFVPTVFAARQFINHGHVMVNGRRCNIGSARLKPGDVVQVREKSRNLALVLEALGSPERDIPEYVEVDPKAMTATYKRVPALADVPYPVKMEPAQVVEFYSS</sequence>
<dbReference type="EMBL" id="CP000158">
    <property type="protein sequence ID" value="ABI76735.1"/>
    <property type="molecule type" value="Genomic_DNA"/>
</dbReference>
<dbReference type="RefSeq" id="WP_011646957.1">
    <property type="nucleotide sequence ID" value="NC_008358.1"/>
</dbReference>
<dbReference type="SMR" id="Q0C0T6"/>
<dbReference type="STRING" id="228405.HNE_1956"/>
<dbReference type="KEGG" id="hne:HNE_1956"/>
<dbReference type="eggNOG" id="COG0522">
    <property type="taxonomic scope" value="Bacteria"/>
</dbReference>
<dbReference type="HOGENOM" id="CLU_092403_0_0_5"/>
<dbReference type="Proteomes" id="UP000001959">
    <property type="component" value="Chromosome"/>
</dbReference>
<dbReference type="GO" id="GO:0015935">
    <property type="term" value="C:small ribosomal subunit"/>
    <property type="evidence" value="ECO:0007669"/>
    <property type="project" value="InterPro"/>
</dbReference>
<dbReference type="GO" id="GO:0019843">
    <property type="term" value="F:rRNA binding"/>
    <property type="evidence" value="ECO:0007669"/>
    <property type="project" value="UniProtKB-UniRule"/>
</dbReference>
<dbReference type="GO" id="GO:0003735">
    <property type="term" value="F:structural constituent of ribosome"/>
    <property type="evidence" value="ECO:0007669"/>
    <property type="project" value="InterPro"/>
</dbReference>
<dbReference type="GO" id="GO:0042274">
    <property type="term" value="P:ribosomal small subunit biogenesis"/>
    <property type="evidence" value="ECO:0007669"/>
    <property type="project" value="TreeGrafter"/>
</dbReference>
<dbReference type="GO" id="GO:0006412">
    <property type="term" value="P:translation"/>
    <property type="evidence" value="ECO:0007669"/>
    <property type="project" value="UniProtKB-UniRule"/>
</dbReference>
<dbReference type="CDD" id="cd00165">
    <property type="entry name" value="S4"/>
    <property type="match status" value="1"/>
</dbReference>
<dbReference type="FunFam" id="3.10.290.10:FF:000001">
    <property type="entry name" value="30S ribosomal protein S4"/>
    <property type="match status" value="1"/>
</dbReference>
<dbReference type="Gene3D" id="1.10.1050.10">
    <property type="entry name" value="Ribosomal Protein S4 Delta 41, Chain A, domain 1"/>
    <property type="match status" value="1"/>
</dbReference>
<dbReference type="Gene3D" id="3.10.290.10">
    <property type="entry name" value="RNA-binding S4 domain"/>
    <property type="match status" value="1"/>
</dbReference>
<dbReference type="HAMAP" id="MF_01306_B">
    <property type="entry name" value="Ribosomal_uS4_B"/>
    <property type="match status" value="1"/>
</dbReference>
<dbReference type="InterPro" id="IPR022801">
    <property type="entry name" value="Ribosomal_uS4"/>
</dbReference>
<dbReference type="InterPro" id="IPR005709">
    <property type="entry name" value="Ribosomal_uS4_bac-type"/>
</dbReference>
<dbReference type="InterPro" id="IPR018079">
    <property type="entry name" value="Ribosomal_uS4_CS"/>
</dbReference>
<dbReference type="InterPro" id="IPR001912">
    <property type="entry name" value="Ribosomal_uS4_N"/>
</dbReference>
<dbReference type="InterPro" id="IPR002942">
    <property type="entry name" value="S4_RNA-bd"/>
</dbReference>
<dbReference type="InterPro" id="IPR036986">
    <property type="entry name" value="S4_RNA-bd_sf"/>
</dbReference>
<dbReference type="NCBIfam" id="NF003717">
    <property type="entry name" value="PRK05327.1"/>
    <property type="match status" value="1"/>
</dbReference>
<dbReference type="NCBIfam" id="TIGR01017">
    <property type="entry name" value="rpsD_bact"/>
    <property type="match status" value="1"/>
</dbReference>
<dbReference type="PANTHER" id="PTHR11831">
    <property type="entry name" value="30S 40S RIBOSOMAL PROTEIN"/>
    <property type="match status" value="1"/>
</dbReference>
<dbReference type="PANTHER" id="PTHR11831:SF4">
    <property type="entry name" value="SMALL RIBOSOMAL SUBUNIT PROTEIN US4M"/>
    <property type="match status" value="1"/>
</dbReference>
<dbReference type="Pfam" id="PF00163">
    <property type="entry name" value="Ribosomal_S4"/>
    <property type="match status" value="1"/>
</dbReference>
<dbReference type="Pfam" id="PF01479">
    <property type="entry name" value="S4"/>
    <property type="match status" value="1"/>
</dbReference>
<dbReference type="SMART" id="SM01390">
    <property type="entry name" value="Ribosomal_S4"/>
    <property type="match status" value="1"/>
</dbReference>
<dbReference type="SMART" id="SM00363">
    <property type="entry name" value="S4"/>
    <property type="match status" value="1"/>
</dbReference>
<dbReference type="SUPFAM" id="SSF55174">
    <property type="entry name" value="Alpha-L RNA-binding motif"/>
    <property type="match status" value="1"/>
</dbReference>
<dbReference type="PROSITE" id="PS00632">
    <property type="entry name" value="RIBOSOMAL_S4"/>
    <property type="match status" value="1"/>
</dbReference>
<dbReference type="PROSITE" id="PS50889">
    <property type="entry name" value="S4"/>
    <property type="match status" value="1"/>
</dbReference>